<name>Y315_NEIG1</name>
<keyword id="KW-0067">ATP-binding</keyword>
<keyword id="KW-0342">GTP-binding</keyword>
<keyword id="KW-0547">Nucleotide-binding</keyword>
<keyword id="KW-1185">Reference proteome</keyword>
<comment type="function">
    <text evidence="1">Displays ATPase and GTPase activities.</text>
</comment>
<comment type="similarity">
    <text evidence="1">Belongs to the RapZ-like family.</text>
</comment>
<feature type="chain" id="PRO_0000107733" description="Nucleotide-binding protein NGO_0315">
    <location>
        <begin position="1"/>
        <end position="284"/>
    </location>
</feature>
<feature type="binding site" evidence="1">
    <location>
        <begin position="8"/>
        <end position="15"/>
    </location>
    <ligand>
        <name>ATP</name>
        <dbReference type="ChEBI" id="CHEBI:30616"/>
    </ligand>
</feature>
<feature type="binding site" evidence="1">
    <location>
        <begin position="58"/>
        <end position="61"/>
    </location>
    <ligand>
        <name>GTP</name>
        <dbReference type="ChEBI" id="CHEBI:37565"/>
    </ligand>
</feature>
<dbReference type="EMBL" id="AE004969">
    <property type="protein sequence ID" value="AAW89062.1"/>
    <property type="molecule type" value="Genomic_DNA"/>
</dbReference>
<dbReference type="RefSeq" id="YP_207474.1">
    <property type="nucleotide sequence ID" value="NC_002946.2"/>
</dbReference>
<dbReference type="SMR" id="Q5F9S5"/>
<dbReference type="STRING" id="242231.NGO_0315"/>
<dbReference type="KEGG" id="ngo:NGO_0315"/>
<dbReference type="PATRIC" id="fig|242231.10.peg.385"/>
<dbReference type="HOGENOM" id="CLU_059558_1_1_4"/>
<dbReference type="Proteomes" id="UP000000535">
    <property type="component" value="Chromosome"/>
</dbReference>
<dbReference type="GO" id="GO:0005524">
    <property type="term" value="F:ATP binding"/>
    <property type="evidence" value="ECO:0007669"/>
    <property type="project" value="UniProtKB-UniRule"/>
</dbReference>
<dbReference type="GO" id="GO:0005525">
    <property type="term" value="F:GTP binding"/>
    <property type="evidence" value="ECO:0007669"/>
    <property type="project" value="UniProtKB-UniRule"/>
</dbReference>
<dbReference type="Gene3D" id="3.40.50.300">
    <property type="entry name" value="P-loop containing nucleotide triphosphate hydrolases"/>
    <property type="match status" value="1"/>
</dbReference>
<dbReference type="HAMAP" id="MF_00636">
    <property type="entry name" value="RapZ_like"/>
    <property type="match status" value="1"/>
</dbReference>
<dbReference type="InterPro" id="IPR027417">
    <property type="entry name" value="P-loop_NTPase"/>
</dbReference>
<dbReference type="InterPro" id="IPR005337">
    <property type="entry name" value="RapZ-like"/>
</dbReference>
<dbReference type="InterPro" id="IPR053930">
    <property type="entry name" value="RapZ-like_N"/>
</dbReference>
<dbReference type="InterPro" id="IPR053931">
    <property type="entry name" value="RapZ_C"/>
</dbReference>
<dbReference type="NCBIfam" id="NF003828">
    <property type="entry name" value="PRK05416.1"/>
    <property type="match status" value="1"/>
</dbReference>
<dbReference type="PANTHER" id="PTHR30448">
    <property type="entry name" value="RNASE ADAPTER PROTEIN RAPZ"/>
    <property type="match status" value="1"/>
</dbReference>
<dbReference type="PANTHER" id="PTHR30448:SF0">
    <property type="entry name" value="RNASE ADAPTER PROTEIN RAPZ"/>
    <property type="match status" value="1"/>
</dbReference>
<dbReference type="Pfam" id="PF22740">
    <property type="entry name" value="PapZ_C"/>
    <property type="match status" value="1"/>
</dbReference>
<dbReference type="Pfam" id="PF03668">
    <property type="entry name" value="RapZ-like_N"/>
    <property type="match status" value="1"/>
</dbReference>
<dbReference type="PIRSF" id="PIRSF005052">
    <property type="entry name" value="P-loopkin"/>
    <property type="match status" value="1"/>
</dbReference>
<dbReference type="SUPFAM" id="SSF52540">
    <property type="entry name" value="P-loop containing nucleoside triphosphate hydrolases"/>
    <property type="match status" value="1"/>
</dbReference>
<evidence type="ECO:0000255" key="1">
    <source>
        <dbReference type="HAMAP-Rule" id="MF_00636"/>
    </source>
</evidence>
<gene>
    <name type="ordered locus">NGO_0315</name>
</gene>
<sequence>MKIVLISGLSGSGKSVALRQMEDLGYFCVDNLPLEMLPSLVSYHIERADETELAVSVDVRSGIDIAQAREQIAYLRGLGHRVEVLFVEAEEAVLVRRFSETRRGHPLSNQDMTLLESLKKEREWLFPLKEIAYCIDTSKMNAQQLRHAVRQWLKVERTGLLVVLESFGFKYGVPNNADFMFDMRSLPNPYYDPELRPYTGMDKPVWDYLDGQPLAQEMVDGIERFVTRWLPRLEDESRSYVTVAIGCTGGQHRSVYIVEKLARRLKGRYELLIRHRQAQNLSGR</sequence>
<proteinExistence type="inferred from homology"/>
<accession>Q5F9S5</accession>
<protein>
    <recommendedName>
        <fullName evidence="1">Nucleotide-binding protein NGO_0315</fullName>
    </recommendedName>
</protein>
<reference key="1">
    <citation type="submission" date="2003-03" db="EMBL/GenBank/DDBJ databases">
        <title>The complete genome sequence of Neisseria gonorrhoeae.</title>
        <authorList>
            <person name="Lewis L.A."/>
            <person name="Gillaspy A.F."/>
            <person name="McLaughlin R.E."/>
            <person name="Gipson M."/>
            <person name="Ducey T.F."/>
            <person name="Ownbey T."/>
            <person name="Hartman K."/>
            <person name="Nydick C."/>
            <person name="Carson M.B."/>
            <person name="Vaughn J."/>
            <person name="Thomson C."/>
            <person name="Song L."/>
            <person name="Lin S."/>
            <person name="Yuan X."/>
            <person name="Najar F."/>
            <person name="Zhan M."/>
            <person name="Ren Q."/>
            <person name="Zhu H."/>
            <person name="Qi S."/>
            <person name="Kenton S.M."/>
            <person name="Lai H."/>
            <person name="White J.D."/>
            <person name="Clifton S."/>
            <person name="Roe B.A."/>
            <person name="Dyer D.W."/>
        </authorList>
    </citation>
    <scope>NUCLEOTIDE SEQUENCE [LARGE SCALE GENOMIC DNA]</scope>
    <source>
        <strain>ATCC 700825 / FA 1090</strain>
    </source>
</reference>
<organism>
    <name type="scientific">Neisseria gonorrhoeae (strain ATCC 700825 / FA 1090)</name>
    <dbReference type="NCBI Taxonomy" id="242231"/>
    <lineage>
        <taxon>Bacteria</taxon>
        <taxon>Pseudomonadati</taxon>
        <taxon>Pseudomonadota</taxon>
        <taxon>Betaproteobacteria</taxon>
        <taxon>Neisseriales</taxon>
        <taxon>Neisseriaceae</taxon>
        <taxon>Neisseria</taxon>
    </lineage>
</organism>